<protein>
    <recommendedName>
        <fullName>Tyrosyl-DNA phosphodiesterase 1</fullName>
        <shortName>Tyr-DNA phosphodiesterase 1</shortName>
        <ecNumber evidence="2">3.1.4.-</ecNumber>
    </recommendedName>
    <alternativeName>
        <fullName>Protein expressed in male leptotene and zygotene spermatocytes 501</fullName>
        <shortName>MLZ-501</shortName>
    </alternativeName>
</protein>
<organism>
    <name type="scientific">Mus musculus</name>
    <name type="common">Mouse</name>
    <dbReference type="NCBI Taxonomy" id="10090"/>
    <lineage>
        <taxon>Eukaryota</taxon>
        <taxon>Metazoa</taxon>
        <taxon>Chordata</taxon>
        <taxon>Craniata</taxon>
        <taxon>Vertebrata</taxon>
        <taxon>Euteleostomi</taxon>
        <taxon>Mammalia</taxon>
        <taxon>Eutheria</taxon>
        <taxon>Euarchontoglires</taxon>
        <taxon>Glires</taxon>
        <taxon>Rodentia</taxon>
        <taxon>Myomorpha</taxon>
        <taxon>Muroidea</taxon>
        <taxon>Muridae</taxon>
        <taxon>Murinae</taxon>
        <taxon>Mus</taxon>
        <taxon>Mus</taxon>
    </lineage>
</organism>
<comment type="function">
    <text evidence="2 4 5">DNA repair enzyme that can remove a variety of covalent adducts from DNA through hydrolysis of a 3'-phosphodiester bond, giving rise to DNA with a free 3' phosphate. Catalyzes the hydrolysis of dead-end complexes between DNA and the topoisomerase I active site tyrosine residue. Hydrolyzes 3'-phosphoglycolates on protruding 3' ends on DNA double-strand breaks due to DNA damage by radiation and free radicals. Acts on blunt-ended double-strand DNA breaks and on single-stranded DNA. Has low 3'exonuclease activity and can remove a single nucleoside from the 3'end of DNA and RNA molecules with 3'hydroxyl groups. Has no exonuclease activity towards DNA or RNA with a 3'phosphate (By similarity).</text>
</comment>
<comment type="subunit">
    <text evidence="2">Monomer.</text>
</comment>
<comment type="subcellular location">
    <subcellularLocation>
        <location evidence="6">Nucleus</location>
    </subcellularLocation>
    <subcellularLocation>
        <location evidence="5">Cytoplasm</location>
    </subcellularLocation>
</comment>
<comment type="tissue specificity">
    <text evidence="5 6">Ubiquitous.</text>
</comment>
<comment type="disruption phenotype">
    <text evidence="4">Mice display an inability to rapidly repair single-strand DNA breaks due to covalent bonds between TOP1 and DNA. They are hypersensitive to camptothecin, topotecan and bleomycin.</text>
</comment>
<comment type="similarity">
    <text evidence="7">Belongs to the tyrosyl-DNA phosphodiesterase family.</text>
</comment>
<comment type="sequence caution" evidence="7">
    <conflict type="erroneous initiation">
        <sequence resource="EMBL-CDS" id="AAH19804"/>
    </conflict>
</comment>
<keyword id="KW-0963">Cytoplasm</keyword>
<keyword id="KW-0227">DNA damage</keyword>
<keyword id="KW-0234">DNA repair</keyword>
<keyword id="KW-0269">Exonuclease</keyword>
<keyword id="KW-0378">Hydrolase</keyword>
<keyword id="KW-0540">Nuclease</keyword>
<keyword id="KW-0539">Nucleus</keyword>
<keyword id="KW-0597">Phosphoprotein</keyword>
<keyword id="KW-1185">Reference proteome</keyword>
<keyword id="KW-0677">Repeat</keyword>
<dbReference type="EC" id="3.1.4.-" evidence="2"/>
<dbReference type="EMBL" id="AK033868">
    <property type="protein sequence ID" value="BAC28500.1"/>
    <property type="molecule type" value="mRNA"/>
</dbReference>
<dbReference type="EMBL" id="BC019804">
    <property type="protein sequence ID" value="AAH19804.1"/>
    <property type="status" value="ALT_INIT"/>
    <property type="molecule type" value="mRNA"/>
</dbReference>
<dbReference type="CCDS" id="CCDS26105.2"/>
<dbReference type="SMR" id="Q8BJ37"/>
<dbReference type="FunCoup" id="Q8BJ37">
    <property type="interactions" value="3362"/>
</dbReference>
<dbReference type="IntAct" id="Q8BJ37">
    <property type="interactions" value="2"/>
</dbReference>
<dbReference type="MINT" id="Q8BJ37"/>
<dbReference type="STRING" id="10090.ENSMUSP00000118656"/>
<dbReference type="ChEMBL" id="CHEMBL4523381"/>
<dbReference type="GlyGen" id="Q8BJ37">
    <property type="glycosylation" value="2 sites, 1 O-linked glycan (1 site)"/>
</dbReference>
<dbReference type="iPTMnet" id="Q8BJ37"/>
<dbReference type="PhosphoSitePlus" id="Q8BJ37"/>
<dbReference type="jPOST" id="Q8BJ37"/>
<dbReference type="PaxDb" id="10090-ENSMUSP00000118656"/>
<dbReference type="ProteomicsDB" id="297763"/>
<dbReference type="Pumba" id="Q8BJ37"/>
<dbReference type="UCSC" id="uc007osf.2">
    <property type="organism name" value="mouse"/>
</dbReference>
<dbReference type="AGR" id="MGI:1920036"/>
<dbReference type="MGI" id="MGI:1920036">
    <property type="gene designation" value="Tdp1"/>
</dbReference>
<dbReference type="eggNOG" id="KOG2031">
    <property type="taxonomic scope" value="Eukaryota"/>
</dbReference>
<dbReference type="InParanoid" id="Q8BJ37"/>
<dbReference type="BRENDA" id="3.1.4.1">
    <property type="organism ID" value="3474"/>
</dbReference>
<dbReference type="Reactome" id="R-MMU-5693571">
    <property type="pathway name" value="Nonhomologous End-Joining (NHEJ)"/>
</dbReference>
<dbReference type="ChiTaRS" id="Tdp1">
    <property type="organism name" value="mouse"/>
</dbReference>
<dbReference type="PRO" id="PR:Q8BJ37"/>
<dbReference type="Proteomes" id="UP000000589">
    <property type="component" value="Unplaced"/>
</dbReference>
<dbReference type="RNAct" id="Q8BJ37">
    <property type="molecule type" value="protein"/>
</dbReference>
<dbReference type="GO" id="GO:0005634">
    <property type="term" value="C:nucleus"/>
    <property type="evidence" value="ECO:0000314"/>
    <property type="project" value="MGI"/>
</dbReference>
<dbReference type="GO" id="GO:0017005">
    <property type="term" value="F:3'-tyrosyl-DNA phosphodiesterase activity"/>
    <property type="evidence" value="ECO:0000250"/>
    <property type="project" value="UniProtKB"/>
</dbReference>
<dbReference type="GO" id="GO:0004527">
    <property type="term" value="F:exonuclease activity"/>
    <property type="evidence" value="ECO:0007669"/>
    <property type="project" value="UniProtKB-KW"/>
</dbReference>
<dbReference type="GO" id="GO:0006281">
    <property type="term" value="P:DNA repair"/>
    <property type="evidence" value="ECO:0000315"/>
    <property type="project" value="MGI"/>
</dbReference>
<dbReference type="GO" id="GO:0000012">
    <property type="term" value="P:single strand break repair"/>
    <property type="evidence" value="ECO:0000315"/>
    <property type="project" value="MGI"/>
</dbReference>
<dbReference type="CDD" id="cd09193">
    <property type="entry name" value="PLDc_mTdp1_1"/>
    <property type="match status" value="1"/>
</dbReference>
<dbReference type="CDD" id="cd09195">
    <property type="entry name" value="PLDc_mTdp1_2"/>
    <property type="match status" value="1"/>
</dbReference>
<dbReference type="FunFam" id="3.30.870.10:FF:000012">
    <property type="entry name" value="Tyrosyl-DNA phosphodiesterase 1"/>
    <property type="match status" value="1"/>
</dbReference>
<dbReference type="FunFam" id="3.30.870.10:FF:000020">
    <property type="entry name" value="Tyrosyl-DNA phosphodiesterase 1"/>
    <property type="match status" value="1"/>
</dbReference>
<dbReference type="Gene3D" id="3.30.870.10">
    <property type="entry name" value="Endonuclease Chain A"/>
    <property type="match status" value="2"/>
</dbReference>
<dbReference type="InterPro" id="IPR010347">
    <property type="entry name" value="Tdp1"/>
</dbReference>
<dbReference type="PANTHER" id="PTHR12415">
    <property type="entry name" value="TYROSYL-DNA PHOSPHODIESTERASE 1"/>
    <property type="match status" value="1"/>
</dbReference>
<dbReference type="PANTHER" id="PTHR12415:SF0">
    <property type="entry name" value="TYROSYL-DNA PHOSPHODIESTERASE 1"/>
    <property type="match status" value="1"/>
</dbReference>
<dbReference type="Pfam" id="PF06087">
    <property type="entry name" value="Tyr-DNA_phospho"/>
    <property type="match status" value="1"/>
</dbReference>
<dbReference type="SUPFAM" id="SSF56024">
    <property type="entry name" value="Phospholipase D/nuclease"/>
    <property type="match status" value="2"/>
</dbReference>
<evidence type="ECO:0000250" key="1">
    <source>
        <dbReference type="UniProtKB" id="Q4G056"/>
    </source>
</evidence>
<evidence type="ECO:0000250" key="2">
    <source>
        <dbReference type="UniProtKB" id="Q9NUW8"/>
    </source>
</evidence>
<evidence type="ECO:0000256" key="3">
    <source>
        <dbReference type="SAM" id="MobiDB-lite"/>
    </source>
</evidence>
<evidence type="ECO:0000269" key="4">
    <source>
    </source>
</evidence>
<evidence type="ECO:0000269" key="5">
    <source>
    </source>
</evidence>
<evidence type="ECO:0000269" key="6">
    <source>
    </source>
</evidence>
<evidence type="ECO:0000305" key="7"/>
<evidence type="ECO:0007744" key="8">
    <source>
    </source>
</evidence>
<sequence>MSQESSYGKWTISSSDESEDEKPKPDKPSASSHPQAGQGVSKELIYTCSEARKVAHKRQISPVKFNDADSVLPHKKQKSDSPEGLGWCLSSSDDDQQPDVTQQEQPKRVLPQEKKHVSSPDVTTAQKVVDRSPPASLRPQRADDEYETSGEGQDIWDMLDKGNPFQFYLTRVSGIKAKYNSKALHIKDILSPLFGTLVSSAQFNYCFDVDWLIKQYPPEFRKNPILLVHGDKREAKADLHAQAKPYANISLCQAKLDIAFGTHHTKMMLLLYEEGLRVVIHTSNLIREDWHQKTQGIWLSPLYPRIDQGSHTAGESSTRFKADLTSYLTAYNAPPLQEWIDIIQEHDLSETNVYLIGSTPGRFQGSHRDNWGHFRLRKLLQAHAPSTPKGECWPIVGQFSSIGSLGPDESKWLCSEFKDSLLALREEGRPPGKSAVPLHLIYPSVENVRTSLEGYPAGGSLPYSIQTAEKQRWLHSYFHKWSAETSGRSNAMPHIKTYMRPSPDFSKLAWFLVTSANLSKAAWGALEKNGTQLMIRSYELGVLFLPSAFGLDTFKVKQKFFSSSCEPTASFPVPYDLPPELYRSKDRPWIWNIPYVKAPDTHGNMWVPS</sequence>
<proteinExistence type="evidence at protein level"/>
<gene>
    <name type="primary">Tdp1</name>
</gene>
<accession>Q8BJ37</accession>
<accession>Q8VE39</accession>
<reference key="1">
    <citation type="journal article" date="2005" name="Science">
        <title>The transcriptional landscape of the mammalian genome.</title>
        <authorList>
            <person name="Carninci P."/>
            <person name="Kasukawa T."/>
            <person name="Katayama S."/>
            <person name="Gough J."/>
            <person name="Frith M.C."/>
            <person name="Maeda N."/>
            <person name="Oyama R."/>
            <person name="Ravasi T."/>
            <person name="Lenhard B."/>
            <person name="Wells C."/>
            <person name="Kodzius R."/>
            <person name="Shimokawa K."/>
            <person name="Bajic V.B."/>
            <person name="Brenner S.E."/>
            <person name="Batalov S."/>
            <person name="Forrest A.R."/>
            <person name="Zavolan M."/>
            <person name="Davis M.J."/>
            <person name="Wilming L.G."/>
            <person name="Aidinis V."/>
            <person name="Allen J.E."/>
            <person name="Ambesi-Impiombato A."/>
            <person name="Apweiler R."/>
            <person name="Aturaliya R.N."/>
            <person name="Bailey T.L."/>
            <person name="Bansal M."/>
            <person name="Baxter L."/>
            <person name="Beisel K.W."/>
            <person name="Bersano T."/>
            <person name="Bono H."/>
            <person name="Chalk A.M."/>
            <person name="Chiu K.P."/>
            <person name="Choudhary V."/>
            <person name="Christoffels A."/>
            <person name="Clutterbuck D.R."/>
            <person name="Crowe M.L."/>
            <person name="Dalla E."/>
            <person name="Dalrymple B.P."/>
            <person name="de Bono B."/>
            <person name="Della Gatta G."/>
            <person name="di Bernardo D."/>
            <person name="Down T."/>
            <person name="Engstrom P."/>
            <person name="Fagiolini M."/>
            <person name="Faulkner G."/>
            <person name="Fletcher C.F."/>
            <person name="Fukushima T."/>
            <person name="Furuno M."/>
            <person name="Futaki S."/>
            <person name="Gariboldi M."/>
            <person name="Georgii-Hemming P."/>
            <person name="Gingeras T.R."/>
            <person name="Gojobori T."/>
            <person name="Green R.E."/>
            <person name="Gustincich S."/>
            <person name="Harbers M."/>
            <person name="Hayashi Y."/>
            <person name="Hensch T.K."/>
            <person name="Hirokawa N."/>
            <person name="Hill D."/>
            <person name="Huminiecki L."/>
            <person name="Iacono M."/>
            <person name="Ikeo K."/>
            <person name="Iwama A."/>
            <person name="Ishikawa T."/>
            <person name="Jakt M."/>
            <person name="Kanapin A."/>
            <person name="Katoh M."/>
            <person name="Kawasawa Y."/>
            <person name="Kelso J."/>
            <person name="Kitamura H."/>
            <person name="Kitano H."/>
            <person name="Kollias G."/>
            <person name="Krishnan S.P."/>
            <person name="Kruger A."/>
            <person name="Kummerfeld S.K."/>
            <person name="Kurochkin I.V."/>
            <person name="Lareau L.F."/>
            <person name="Lazarevic D."/>
            <person name="Lipovich L."/>
            <person name="Liu J."/>
            <person name="Liuni S."/>
            <person name="McWilliam S."/>
            <person name="Madan Babu M."/>
            <person name="Madera M."/>
            <person name="Marchionni L."/>
            <person name="Matsuda H."/>
            <person name="Matsuzawa S."/>
            <person name="Miki H."/>
            <person name="Mignone F."/>
            <person name="Miyake S."/>
            <person name="Morris K."/>
            <person name="Mottagui-Tabar S."/>
            <person name="Mulder N."/>
            <person name="Nakano N."/>
            <person name="Nakauchi H."/>
            <person name="Ng P."/>
            <person name="Nilsson R."/>
            <person name="Nishiguchi S."/>
            <person name="Nishikawa S."/>
            <person name="Nori F."/>
            <person name="Ohara O."/>
            <person name="Okazaki Y."/>
            <person name="Orlando V."/>
            <person name="Pang K.C."/>
            <person name="Pavan W.J."/>
            <person name="Pavesi G."/>
            <person name="Pesole G."/>
            <person name="Petrovsky N."/>
            <person name="Piazza S."/>
            <person name="Reed J."/>
            <person name="Reid J.F."/>
            <person name="Ring B.Z."/>
            <person name="Ringwald M."/>
            <person name="Rost B."/>
            <person name="Ruan Y."/>
            <person name="Salzberg S.L."/>
            <person name="Sandelin A."/>
            <person name="Schneider C."/>
            <person name="Schoenbach C."/>
            <person name="Sekiguchi K."/>
            <person name="Semple C.A."/>
            <person name="Seno S."/>
            <person name="Sessa L."/>
            <person name="Sheng Y."/>
            <person name="Shibata Y."/>
            <person name="Shimada H."/>
            <person name="Shimada K."/>
            <person name="Silva D."/>
            <person name="Sinclair B."/>
            <person name="Sperling S."/>
            <person name="Stupka E."/>
            <person name="Sugiura K."/>
            <person name="Sultana R."/>
            <person name="Takenaka Y."/>
            <person name="Taki K."/>
            <person name="Tammoja K."/>
            <person name="Tan S.L."/>
            <person name="Tang S."/>
            <person name="Taylor M.S."/>
            <person name="Tegner J."/>
            <person name="Teichmann S.A."/>
            <person name="Ueda H.R."/>
            <person name="van Nimwegen E."/>
            <person name="Verardo R."/>
            <person name="Wei C.L."/>
            <person name="Yagi K."/>
            <person name="Yamanishi H."/>
            <person name="Zabarovsky E."/>
            <person name="Zhu S."/>
            <person name="Zimmer A."/>
            <person name="Hide W."/>
            <person name="Bult C."/>
            <person name="Grimmond S.M."/>
            <person name="Teasdale R.D."/>
            <person name="Liu E.T."/>
            <person name="Brusic V."/>
            <person name="Quackenbush J."/>
            <person name="Wahlestedt C."/>
            <person name="Mattick J.S."/>
            <person name="Hume D.A."/>
            <person name="Kai C."/>
            <person name="Sasaki D."/>
            <person name="Tomaru Y."/>
            <person name="Fukuda S."/>
            <person name="Kanamori-Katayama M."/>
            <person name="Suzuki M."/>
            <person name="Aoki J."/>
            <person name="Arakawa T."/>
            <person name="Iida J."/>
            <person name="Imamura K."/>
            <person name="Itoh M."/>
            <person name="Kato T."/>
            <person name="Kawaji H."/>
            <person name="Kawagashira N."/>
            <person name="Kawashima T."/>
            <person name="Kojima M."/>
            <person name="Kondo S."/>
            <person name="Konno H."/>
            <person name="Nakano K."/>
            <person name="Ninomiya N."/>
            <person name="Nishio T."/>
            <person name="Okada M."/>
            <person name="Plessy C."/>
            <person name="Shibata K."/>
            <person name="Shiraki T."/>
            <person name="Suzuki S."/>
            <person name="Tagami M."/>
            <person name="Waki K."/>
            <person name="Watahiki A."/>
            <person name="Okamura-Oho Y."/>
            <person name="Suzuki H."/>
            <person name="Kawai J."/>
            <person name="Hayashizaki Y."/>
        </authorList>
    </citation>
    <scope>NUCLEOTIDE SEQUENCE [LARGE SCALE MRNA]</scope>
    <source>
        <strain>C57BL/6J</strain>
        <tissue>Diencephalon</tissue>
    </source>
</reference>
<reference key="2">
    <citation type="journal article" date="2004" name="Genome Res.">
        <title>The status, quality, and expansion of the NIH full-length cDNA project: the Mammalian Gene Collection (MGC).</title>
        <authorList>
            <consortium name="The MGC Project Team"/>
        </authorList>
    </citation>
    <scope>NUCLEOTIDE SEQUENCE [LARGE SCALE MRNA] OF 212-609</scope>
</reference>
<reference key="3">
    <citation type="journal article" date="2007" name="EMBO J.">
        <title>TDP1 facilitates chromosomal single-strand break repair in neurons and is neuroprotective in vivo.</title>
        <authorList>
            <person name="Katyal S."/>
            <person name="el-Khamisy S.F."/>
            <person name="Russell H.R."/>
            <person name="Li Y."/>
            <person name="Ju L."/>
            <person name="Caldecott K.W."/>
            <person name="McKinnon P.J."/>
        </authorList>
    </citation>
    <scope>FUNCTION</scope>
    <scope>DISRUPTION PHENOTYPE</scope>
</reference>
<reference key="4">
    <citation type="journal article" date="2007" name="EMBO J.">
        <title>Spinocerebellar ataxia with axonal neuropathy: consequence of a Tdp1 recessive neomorphic mutation?</title>
        <authorList>
            <person name="Hirano R."/>
            <person name="Interthal H."/>
            <person name="Huang C."/>
            <person name="Nakamura T."/>
            <person name="Deguchi K."/>
            <person name="Choi K."/>
            <person name="Bhattacharjee M.B."/>
            <person name="Arimura K."/>
            <person name="Umehara F."/>
            <person name="Izumo S."/>
            <person name="Northrop J.L."/>
            <person name="Salih M.A.M."/>
            <person name="Inoue K."/>
            <person name="Armstrong D.L."/>
            <person name="Champoux J.J."/>
            <person name="Takashima H."/>
            <person name="Boerkoel C.F."/>
        </authorList>
    </citation>
    <scope>FUNCTION</scope>
    <scope>SUBCELLULAR LOCATION</scope>
    <scope>TISSUE SPECIFICITY</scope>
</reference>
<reference key="5">
    <citation type="journal article" date="2010" name="Cell">
        <title>A tissue-specific atlas of mouse protein phosphorylation and expression.</title>
        <authorList>
            <person name="Huttlin E.L."/>
            <person name="Jedrychowski M.P."/>
            <person name="Elias J.E."/>
            <person name="Goswami T."/>
            <person name="Rad R."/>
            <person name="Beausoleil S.A."/>
            <person name="Villen J."/>
            <person name="Haas W."/>
            <person name="Sowa M.E."/>
            <person name="Gygi S.P."/>
        </authorList>
    </citation>
    <scope>PHOSPHORYLATION [LARGE SCALE ANALYSIS] AT SER-119 AND SER-149</scope>
    <scope>IDENTIFICATION BY MASS SPECTROMETRY [LARGE SCALE ANALYSIS]</scope>
    <source>
        <tissue>Lung</tissue>
        <tissue>Spleen</tissue>
        <tissue>Testis</tissue>
    </source>
</reference>
<reference key="6">
    <citation type="journal article" date="2010" name="J. Hum. Genet.">
        <title>Screening of genes involved in chromosome segregation during meiosis I: toward the identification of genes responsible for infertility in humans.</title>
        <authorList>
            <person name="Kogo H."/>
            <person name="Kowa-Sugiyama H."/>
            <person name="Yamada K."/>
            <person name="Bolor H."/>
            <person name="Tsutsumi M."/>
            <person name="Ohye T."/>
            <person name="Inagaki H."/>
            <person name="Taniguchi M."/>
            <person name="Toda T."/>
            <person name="Kurahashi H."/>
        </authorList>
    </citation>
    <scope>TISSUE SPECIFICITY</scope>
    <scope>SUBCELLULAR LOCATION</scope>
</reference>
<name>TYDP1_MOUSE</name>
<feature type="chain" id="PRO_0000212487" description="Tyrosyl-DNA phosphodiesterase 1">
    <location>
        <begin position="1"/>
        <end position="609"/>
    </location>
</feature>
<feature type="region of interest" description="Disordered" evidence="3">
    <location>
        <begin position="1"/>
        <end position="155"/>
    </location>
</feature>
<feature type="region of interest" description="Interaction with DNA" evidence="2">
    <location>
        <begin position="401"/>
        <end position="404"/>
    </location>
</feature>
<feature type="compositionally biased region" description="Polar residues" evidence="3">
    <location>
        <begin position="1"/>
        <end position="12"/>
    </location>
</feature>
<feature type="compositionally biased region" description="Basic and acidic residues" evidence="3">
    <location>
        <begin position="105"/>
        <end position="118"/>
    </location>
</feature>
<feature type="active site" description="Nucleophile" evidence="2">
    <location>
        <position position="264"/>
    </location>
</feature>
<feature type="active site" description="Proton donor/acceptor" evidence="2">
    <location>
        <position position="494"/>
    </location>
</feature>
<feature type="binding site" evidence="2">
    <location>
        <position position="266"/>
    </location>
    <ligand>
        <name>substrate</name>
    </ligand>
</feature>
<feature type="binding site" evidence="2">
    <location>
        <position position="496"/>
    </location>
    <ligand>
        <name>substrate</name>
    </ligand>
</feature>
<feature type="site" description="Interaction with DNA" evidence="2">
    <location>
        <position position="519"/>
    </location>
</feature>
<feature type="modified residue" description="Phosphoserine" evidence="2">
    <location>
        <position position="61"/>
    </location>
</feature>
<feature type="modified residue" description="Phosphoserine" evidence="8">
    <location>
        <position position="119"/>
    </location>
</feature>
<feature type="modified residue" description="Phosphoserine" evidence="1">
    <location>
        <position position="132"/>
    </location>
</feature>
<feature type="modified residue" description="Phosphothreonine" evidence="2">
    <location>
        <position position="148"/>
    </location>
</feature>
<feature type="modified residue" description="Phosphoserine" evidence="8">
    <location>
        <position position="149"/>
    </location>
</feature>
<feature type="sequence conflict" description="In Ref. 2." evidence="7" ref="2">
    <original>N</original>
    <variation>K</variation>
    <location>
        <position position="223"/>
    </location>
</feature>
<feature type="sequence conflict" description="In Ref. 2; AAH19804." evidence="7" ref="2">
    <original>T</original>
    <variation>A</variation>
    <location>
        <position position="312"/>
    </location>
</feature>
<feature type="sequence conflict" description="In Ref. 2; AAH19804." evidence="7" ref="2">
    <original>T</original>
    <variation>I</variation>
    <location>
        <position position="325"/>
    </location>
</feature>
<feature type="sequence conflict" description="In Ref. 1; BAC28500." evidence="7" ref="1">
    <original>GLDTFKVKQKFFSSSCEPTASFPVPYDLPPELYRSKDRPWIWNIPYVKAPDTHGNMWVPS</original>
    <variation>VSNIVPARSLTCVVNGTLFSSSWLSVGLAW</variation>
    <location>
        <begin position="550"/>
        <end position="609"/>
    </location>
</feature>